<gene>
    <name type="primary">IL4</name>
</gene>
<feature type="signal peptide" evidence="1">
    <location>
        <begin position="1"/>
        <end position="24"/>
    </location>
</feature>
<feature type="chain" id="PRO_0000254894" description="Interleukin-4">
    <location>
        <begin position="25"/>
        <end position="135"/>
    </location>
</feature>
<feature type="glycosylation site" description="N-linked (GlcNAc...) asparagine" evidence="3">
    <location>
        <position position="62"/>
    </location>
</feature>
<feature type="disulfide bond" evidence="1">
    <location>
        <begin position="27"/>
        <end position="135"/>
    </location>
</feature>
<feature type="disulfide bond" evidence="1">
    <location>
        <begin position="48"/>
        <end position="85"/>
    </location>
</feature>
<feature type="disulfide bond" evidence="1">
    <location>
        <begin position="70"/>
        <end position="105"/>
    </location>
</feature>
<name>IL4_BUBCA</name>
<comment type="function">
    <text evidence="2">Participates in at least several B-cell activation processes as well as of other cell types. It is a costimulator of DNA-synthesis. It induces the expression of class II MHC molecules on resting B-cells. It enhances both secretion and cell surface expression of IgE and IgG1. It also regulates the expression of the low affinity Fc receptor for IgE (CD23) on both lymphocytes and monocytes. Positively regulates IL31RA expression in macrophages. Stimulates autophagy in dendritic cells by interfering with mTORC1 signaling and through the induction of RUFY4.</text>
</comment>
<comment type="subcellular location">
    <subcellularLocation>
        <location evidence="1">Secreted</location>
    </subcellularLocation>
</comment>
<comment type="similarity">
    <text evidence="4">Belongs to the IL-4/IL-13 family.</text>
</comment>
<keyword id="KW-0075">B-cell activation</keyword>
<keyword id="KW-0202">Cytokine</keyword>
<keyword id="KW-1015">Disulfide bond</keyword>
<keyword id="KW-0325">Glycoprotein</keyword>
<keyword id="KW-0339">Growth factor</keyword>
<keyword id="KW-0964">Secreted</keyword>
<keyword id="KW-0732">Signal</keyword>
<proteinExistence type="evidence at transcript level"/>
<reference key="1">
    <citation type="journal article" date="2006" name="Vet. Immunol. Immunopathol.">
        <title>Comparative assessment of Th1 and Th2 cytokines of swamp type buffalo and other bubaline breeds by molecular cloning, sequencing and phylogenetics.</title>
        <authorList>
            <person name="Mingala C.N."/>
            <person name="Odbileg R."/>
            <person name="Konnai S."/>
            <person name="Ohashi K."/>
            <person name="Onuma M."/>
        </authorList>
    </citation>
    <scope>NUCLEOTIDE SEQUENCE [MRNA]</scope>
</reference>
<accession>Q2PE74</accession>
<evidence type="ECO:0000250" key="1"/>
<evidence type="ECO:0000250" key="2">
    <source>
        <dbReference type="UniProtKB" id="P07750"/>
    </source>
</evidence>
<evidence type="ECO:0000255" key="3"/>
<evidence type="ECO:0000305" key="4"/>
<sequence length="135" mass="15195">MGLTYQLIPVLVCLLVCTSHFVHGHKCDITLAEIIKTLNILTTRKNSCMELPVADVFAAPKNTTEKETFCRVGIELRRIYRSHTCLNKFLGGLDRNLNSLASKTCSVNEAKTSTSTLKDLLERLKTIMKEKYSKC</sequence>
<protein>
    <recommendedName>
        <fullName>Interleukin-4</fullName>
        <shortName>IL-4</shortName>
    </recommendedName>
    <alternativeName>
        <fullName>B-cell stimulatory factor 1</fullName>
        <shortName>BSF-1</shortName>
    </alternativeName>
    <alternativeName>
        <fullName>Lymphocyte stimulatory factor 1</fullName>
    </alternativeName>
</protein>
<organism>
    <name type="scientific">Bubalus carabanensis</name>
    <name type="common">Swamp type water buffalo</name>
    <name type="synonym">Bubalus bubalis carabanensis</name>
    <dbReference type="NCBI Taxonomy" id="3119969"/>
    <lineage>
        <taxon>Eukaryota</taxon>
        <taxon>Metazoa</taxon>
        <taxon>Chordata</taxon>
        <taxon>Craniata</taxon>
        <taxon>Vertebrata</taxon>
        <taxon>Euteleostomi</taxon>
        <taxon>Mammalia</taxon>
        <taxon>Eutheria</taxon>
        <taxon>Laurasiatheria</taxon>
        <taxon>Artiodactyla</taxon>
        <taxon>Ruminantia</taxon>
        <taxon>Pecora</taxon>
        <taxon>Bovidae</taxon>
        <taxon>Bovinae</taxon>
        <taxon>Bubalus</taxon>
    </lineage>
</organism>
<dbReference type="EMBL" id="AB246275">
    <property type="protein sequence ID" value="BAE75852.1"/>
    <property type="molecule type" value="mRNA"/>
</dbReference>
<dbReference type="SMR" id="Q2PE74"/>
<dbReference type="GlyCosmos" id="Q2PE74">
    <property type="glycosylation" value="1 site, No reported glycans"/>
</dbReference>
<dbReference type="GO" id="GO:0005615">
    <property type="term" value="C:extracellular space"/>
    <property type="evidence" value="ECO:0007669"/>
    <property type="project" value="UniProtKB-KW"/>
</dbReference>
<dbReference type="GO" id="GO:0005125">
    <property type="term" value="F:cytokine activity"/>
    <property type="evidence" value="ECO:0007669"/>
    <property type="project" value="UniProtKB-KW"/>
</dbReference>
<dbReference type="GO" id="GO:0008083">
    <property type="term" value="F:growth factor activity"/>
    <property type="evidence" value="ECO:0007669"/>
    <property type="project" value="UniProtKB-KW"/>
</dbReference>
<dbReference type="GO" id="GO:0005136">
    <property type="term" value="F:interleukin-4 receptor binding"/>
    <property type="evidence" value="ECO:0007669"/>
    <property type="project" value="InterPro"/>
</dbReference>
<dbReference type="GO" id="GO:0042113">
    <property type="term" value="P:B cell activation"/>
    <property type="evidence" value="ECO:0007669"/>
    <property type="project" value="UniProtKB-KW"/>
</dbReference>
<dbReference type="GO" id="GO:0006955">
    <property type="term" value="P:immune response"/>
    <property type="evidence" value="ECO:0007669"/>
    <property type="project" value="InterPro"/>
</dbReference>
<dbReference type="GO" id="GO:0035771">
    <property type="term" value="P:interleukin-4-mediated signaling pathway"/>
    <property type="evidence" value="ECO:0007669"/>
    <property type="project" value="TreeGrafter"/>
</dbReference>
<dbReference type="GO" id="GO:0050728">
    <property type="term" value="P:negative regulation of inflammatory response"/>
    <property type="evidence" value="ECO:0007669"/>
    <property type="project" value="TreeGrafter"/>
</dbReference>
<dbReference type="GO" id="GO:0045893">
    <property type="term" value="P:positive regulation of DNA-templated transcription"/>
    <property type="evidence" value="ECO:0007669"/>
    <property type="project" value="TreeGrafter"/>
</dbReference>
<dbReference type="GO" id="GO:0016239">
    <property type="term" value="P:positive regulation of macroautophagy"/>
    <property type="evidence" value="ECO:0000250"/>
    <property type="project" value="UniProtKB"/>
</dbReference>
<dbReference type="GO" id="GO:0050776">
    <property type="term" value="P:regulation of immune response"/>
    <property type="evidence" value="ECO:0007669"/>
    <property type="project" value="TreeGrafter"/>
</dbReference>
<dbReference type="FunFam" id="1.20.1250.10:FF:000014">
    <property type="entry name" value="Interleukin-4"/>
    <property type="match status" value="1"/>
</dbReference>
<dbReference type="Gene3D" id="1.20.1250.10">
    <property type="match status" value="1"/>
</dbReference>
<dbReference type="InterPro" id="IPR009079">
    <property type="entry name" value="4_helix_cytokine-like_core"/>
</dbReference>
<dbReference type="InterPro" id="IPR002354">
    <property type="entry name" value="IL-4"/>
</dbReference>
<dbReference type="InterPro" id="IPR001325">
    <property type="entry name" value="IL-4/IL-13"/>
</dbReference>
<dbReference type="InterPro" id="IPR018096">
    <property type="entry name" value="IL-4/IL-13_CS"/>
</dbReference>
<dbReference type="PANTHER" id="PTHR47401">
    <property type="entry name" value="INTERLEUKIN-4"/>
    <property type="match status" value="1"/>
</dbReference>
<dbReference type="PANTHER" id="PTHR47401:SF1">
    <property type="entry name" value="INTERLEUKIN-4"/>
    <property type="match status" value="1"/>
</dbReference>
<dbReference type="Pfam" id="PF00727">
    <property type="entry name" value="IL4"/>
    <property type="match status" value="1"/>
</dbReference>
<dbReference type="PIRSF" id="PIRSF001941">
    <property type="entry name" value="Interleukin_4"/>
    <property type="match status" value="1"/>
</dbReference>
<dbReference type="PRINTS" id="PR00431">
    <property type="entry name" value="INTERLEUKIN4"/>
</dbReference>
<dbReference type="SMART" id="SM00190">
    <property type="entry name" value="IL4_13"/>
    <property type="match status" value="1"/>
</dbReference>
<dbReference type="SUPFAM" id="SSF47266">
    <property type="entry name" value="4-helical cytokines"/>
    <property type="match status" value="1"/>
</dbReference>
<dbReference type="PROSITE" id="PS00838">
    <property type="entry name" value="INTERLEUKIN_4_13"/>
    <property type="match status" value="1"/>
</dbReference>